<name>PRHH_PENBI</name>
<accession>A0A1E1FFM9</accession>
<feature type="chain" id="PRO_0000449173" description="Terpene cyclase prhH">
    <location>
        <begin position="1"/>
        <end position="245"/>
    </location>
</feature>
<feature type="transmembrane region" description="Helical" evidence="2">
    <location>
        <begin position="17"/>
        <end position="37"/>
    </location>
</feature>
<feature type="transmembrane region" description="Helical" evidence="2">
    <location>
        <begin position="51"/>
        <end position="71"/>
    </location>
</feature>
<feature type="transmembrane region" description="Helical" evidence="2">
    <location>
        <begin position="76"/>
        <end position="96"/>
    </location>
</feature>
<feature type="transmembrane region" description="Helical" evidence="2">
    <location>
        <begin position="113"/>
        <end position="133"/>
    </location>
</feature>
<feature type="transmembrane region" description="Helical" evidence="2">
    <location>
        <begin position="138"/>
        <end position="158"/>
    </location>
</feature>
<feature type="transmembrane region" description="Helical" evidence="2">
    <location>
        <begin position="170"/>
        <end position="190"/>
    </location>
</feature>
<feature type="transmembrane region" description="Helical" evidence="2">
    <location>
        <begin position="205"/>
        <end position="225"/>
    </location>
</feature>
<dbReference type="EC" id="4.2.3.-" evidence="7"/>
<dbReference type="EMBL" id="LC127182">
    <property type="protein sequence ID" value="BAV69309.1"/>
    <property type="molecule type" value="Genomic_DNA"/>
</dbReference>
<dbReference type="UniPathway" id="UPA00213"/>
<dbReference type="GO" id="GO:0016020">
    <property type="term" value="C:membrane"/>
    <property type="evidence" value="ECO:0007669"/>
    <property type="project" value="UniProtKB-SubCell"/>
</dbReference>
<dbReference type="GO" id="GO:0016829">
    <property type="term" value="F:lyase activity"/>
    <property type="evidence" value="ECO:0007669"/>
    <property type="project" value="UniProtKB-KW"/>
</dbReference>
<dbReference type="GO" id="GO:0016114">
    <property type="term" value="P:terpenoid biosynthetic process"/>
    <property type="evidence" value="ECO:0007669"/>
    <property type="project" value="UniProtKB-UniPathway"/>
</dbReference>
<dbReference type="InterPro" id="IPR039020">
    <property type="entry name" value="PaxB-like"/>
</dbReference>
<dbReference type="PANTHER" id="PTHR42038">
    <property type="match status" value="1"/>
</dbReference>
<dbReference type="PANTHER" id="PTHR42038:SF2">
    <property type="entry name" value="TERPENE CYCLASE AUSL"/>
    <property type="match status" value="1"/>
</dbReference>
<dbReference type="Pfam" id="PF25129">
    <property type="entry name" value="Pyr4-TMTC"/>
    <property type="match status" value="1"/>
</dbReference>
<keyword id="KW-0456">Lyase</keyword>
<keyword id="KW-0472">Membrane</keyword>
<keyword id="KW-0812">Transmembrane</keyword>
<keyword id="KW-1133">Transmembrane helix</keyword>
<sequence>MEEPLTVAAIFRDPFNILAISEVLKVVAAVGWSVNYIGMVHRAWKDQIPSIGILPLCCDIGWEFVYAWMFPDFSSHWQGVVRVWFFLHSAVLLVTLKVSPNDWVHTPLGHRHIVFIYIFVTLVFGAGQYALAAEIGPALGFHWGGALCQFLSSSCGIAQLLSRGHTRGASYLIWFARAISTFAGFIKLCIRFQHNVDGAPWLDSPMCWFYIVTVLSFDAAYPFLYSSMRKLETPALRKESRIKNQ</sequence>
<organism>
    <name type="scientific">Penicillium brasilianum</name>
    <dbReference type="NCBI Taxonomy" id="104259"/>
    <lineage>
        <taxon>Eukaryota</taxon>
        <taxon>Fungi</taxon>
        <taxon>Dikarya</taxon>
        <taxon>Ascomycota</taxon>
        <taxon>Pezizomycotina</taxon>
        <taxon>Eurotiomycetes</taxon>
        <taxon>Eurotiomycetidae</taxon>
        <taxon>Eurotiales</taxon>
        <taxon>Aspergillaceae</taxon>
        <taxon>Penicillium</taxon>
    </lineage>
</organism>
<gene>
    <name evidence="5" type="primary">prhH</name>
</gene>
<evidence type="ECO:0000250" key="1">
    <source>
        <dbReference type="UniProtKB" id="Q5ATJ7"/>
    </source>
</evidence>
<evidence type="ECO:0000255" key="2"/>
<evidence type="ECO:0000269" key="3">
    <source>
    </source>
</evidence>
<evidence type="ECO:0000269" key="4">
    <source>
    </source>
</evidence>
<evidence type="ECO:0000303" key="5">
    <source>
    </source>
</evidence>
<evidence type="ECO:0000305" key="6"/>
<evidence type="ECO:0000305" key="7">
    <source>
    </source>
</evidence>
<evidence type="ECO:0000305" key="8">
    <source>
    </source>
</evidence>
<evidence type="ECO:0000305" key="9">
    <source>
    </source>
</evidence>
<protein>
    <recommendedName>
        <fullName evidence="5">Terpene cyclase prhH</fullName>
        <ecNumber evidence="7">4.2.3.-</ecNumber>
    </recommendedName>
    <alternativeName>
        <fullName evidence="5">Paraherquonin biosynthesis cluster protein H</fullName>
    </alternativeName>
</protein>
<proteinExistence type="inferred from homology"/>
<reference key="1">
    <citation type="journal article" date="2016" name="J. Am. Chem. Soc.">
        <title>Discovery of key dioxygenases that diverged the paraherquonin and acetoxydehydroaustin pathways in Penicillium brasilianum.</title>
        <authorList>
            <person name="Matsuda Y."/>
            <person name="Iwabuchi T."/>
            <person name="Fujimoto T."/>
            <person name="Awakawa T."/>
            <person name="Nakashima Y."/>
            <person name="Mori T."/>
            <person name="Zhang H."/>
            <person name="Hayashi F."/>
            <person name="Abe I."/>
        </authorList>
    </citation>
    <scope>NUCLEOTIDE SEQUENCE [GENOMIC DNA]</scope>
    <scope>FUNCTION</scope>
    <scope>PATHWAY</scope>
    <source>
        <strain>ATCC 22354 / NBRC 6234 / CBS 338.59 / FRR 3454 / IMI 68220</strain>
    </source>
</reference>
<reference key="2">
    <citation type="journal article" date="2017" name="Nat. Chem. Biol.">
        <title>Molecular basis for the unusual ring reconstruction in fungal meroterpenoid biogenesis.</title>
        <authorList>
            <person name="Mori T."/>
            <person name="Iwabuchi T."/>
            <person name="Hoshino S."/>
            <person name="Wang H."/>
            <person name="Matsuda Y."/>
            <person name="Abe I."/>
        </authorList>
    </citation>
    <scope>FUNCTION</scope>
</reference>
<reference key="3">
    <citation type="journal article" date="2018" name="Nat. Commun.">
        <title>Structure function and engineering of multifunctional non-heme iron dependent oxygenases in fungal meroterpenoid biosynthesis.</title>
        <authorList>
            <person name="Nakashima Y."/>
            <person name="Mori T."/>
            <person name="Nakamura H."/>
            <person name="Awakawa T."/>
            <person name="Hoshino S."/>
            <person name="Senda M."/>
            <person name="Senda T."/>
            <person name="Abe I."/>
        </authorList>
    </citation>
    <scope>FUNCTION</scope>
</reference>
<comment type="function">
    <text evidence="1 3 4 7 8 9">Terpene cyclase; part of the gene cluster that mediates the biosynthesis of paraherquonin, a meroterpenoid with a unique, highly congested hexacyclic molecular architecture (PubMed:27602587). The first step of the pathway is the synthesis of 3,5-dimethylorsellinic acid (DMOA) by the polyketide synthase prhL (By similarity). Synthesis of DMOA is followed by farnesylation by the prenyltransferase prhE, methylesterification by the methyl-transferase prhM, epoxidation of the prenyl chain by the flavin-dependent monooxygenase prhF, and cyclization of the farnesyl moiety by the terpene cyclase prhH, to yield the tetracyclic intermediate, protoaustinoid A (By similarity). The short chain dehydrogenase prhI then oxidizes the C-3 alcohol group of the terpene cyclase product to transform protoaustinoid A into protoaustinoid B (PubMed:27602587). The FAD-binding monooxygenase prhJ catalyzes the oxidation of protoaustinoid B into preaustinoid A which is further oxidized into preaustinoid A1 by FAD-binding monooxygenase phrK (PubMed:27602587). Finally, prhA leads to berkeleydione via the berkeleyone B intermediate (PubMed:27602587, PubMed:29317628). PrhA is a multifunctional dioxygenase that first desaturates at C5-C6 to form berkeleyone B, followed by rearrangement of the A/B-ring to form the cycloheptadiene moiety in berkeleydione (PubMed:27602587, PubMed:29317628). Berkeleydione serves as the key intermediate for the biosynthesis of paraherquonin as well as many other meroterpenoids (Probable). The cytochrome P450 monooxygenases prhB, prhD, and prhN, as well as the isomerase prhC, are probably involved in the late stage of paraherquonin biosynthesis, after the production of berkeleydione (Probable). Especially prhC might be a multifunctional enzyme that catalyzes the D-ring expansion via intramolecular methoxy rearrangement, as well as the hydrolysis of the expanded D-ring (Probable).</text>
</comment>
<comment type="pathway">
    <text evidence="7">Secondary metabolite biosynthesis; terpenoid biosynthesis.</text>
</comment>
<comment type="subcellular location">
    <subcellularLocation>
        <location evidence="2">Membrane</location>
        <topology evidence="2">Multi-pass membrane protein</topology>
    </subcellularLocation>
</comment>
<comment type="similarity">
    <text evidence="6">Belongs to the paxB family.</text>
</comment>